<protein>
    <recommendedName>
        <fullName evidence="1">Translational regulator CsrA</fullName>
    </recommendedName>
</protein>
<feature type="chain" id="PRO_1000203637" description="Translational regulator CsrA">
    <location>
        <begin position="1"/>
        <end position="79"/>
    </location>
</feature>
<reference key="1">
    <citation type="submission" date="2009-06" db="EMBL/GenBank/DDBJ databases">
        <title>Complete sequence of Desulfovibrio salexigens DSM 2638.</title>
        <authorList>
            <consortium name="US DOE Joint Genome Institute"/>
            <person name="Lucas S."/>
            <person name="Copeland A."/>
            <person name="Lapidus A."/>
            <person name="Glavina del Rio T."/>
            <person name="Tice H."/>
            <person name="Bruce D."/>
            <person name="Goodwin L."/>
            <person name="Pitluck S."/>
            <person name="Munk A.C."/>
            <person name="Brettin T."/>
            <person name="Detter J.C."/>
            <person name="Han C."/>
            <person name="Tapia R."/>
            <person name="Larimer F."/>
            <person name="Land M."/>
            <person name="Hauser L."/>
            <person name="Kyrpides N."/>
            <person name="Anderson I."/>
            <person name="Wall J.D."/>
            <person name="Arkin A.P."/>
            <person name="Dehal P."/>
            <person name="Chivian D."/>
            <person name="Giles B."/>
            <person name="Hazen T.C."/>
        </authorList>
    </citation>
    <scope>NUCLEOTIDE SEQUENCE [LARGE SCALE GENOMIC DNA]</scope>
    <source>
        <strain>ATCC 14822 / DSM 2638 / NCIMB 8403 / VKM B-1763</strain>
    </source>
</reference>
<dbReference type="EMBL" id="CP001649">
    <property type="protein sequence ID" value="ACS79083.1"/>
    <property type="molecule type" value="Genomic_DNA"/>
</dbReference>
<dbReference type="RefSeq" id="WP_015850902.1">
    <property type="nucleotide sequence ID" value="NC_012881.1"/>
</dbReference>
<dbReference type="SMR" id="C6C0E9"/>
<dbReference type="STRING" id="526222.Desal_1018"/>
<dbReference type="KEGG" id="dsa:Desal_1018"/>
<dbReference type="eggNOG" id="COG1551">
    <property type="taxonomic scope" value="Bacteria"/>
</dbReference>
<dbReference type="HOGENOM" id="CLU_164837_0_2_7"/>
<dbReference type="OrthoDB" id="9809061at2"/>
<dbReference type="Proteomes" id="UP000002601">
    <property type="component" value="Chromosome"/>
</dbReference>
<dbReference type="GO" id="GO:0005829">
    <property type="term" value="C:cytosol"/>
    <property type="evidence" value="ECO:0007669"/>
    <property type="project" value="TreeGrafter"/>
</dbReference>
<dbReference type="GO" id="GO:0048027">
    <property type="term" value="F:mRNA 5'-UTR binding"/>
    <property type="evidence" value="ECO:0007669"/>
    <property type="project" value="UniProtKB-UniRule"/>
</dbReference>
<dbReference type="GO" id="GO:0044781">
    <property type="term" value="P:bacterial-type flagellum organization"/>
    <property type="evidence" value="ECO:0007669"/>
    <property type="project" value="UniProtKB-KW"/>
</dbReference>
<dbReference type="GO" id="GO:0006402">
    <property type="term" value="P:mRNA catabolic process"/>
    <property type="evidence" value="ECO:0007669"/>
    <property type="project" value="InterPro"/>
</dbReference>
<dbReference type="GO" id="GO:0045947">
    <property type="term" value="P:negative regulation of translational initiation"/>
    <property type="evidence" value="ECO:0007669"/>
    <property type="project" value="UniProtKB-UniRule"/>
</dbReference>
<dbReference type="GO" id="GO:1902208">
    <property type="term" value="P:regulation of bacterial-type flagellum assembly"/>
    <property type="evidence" value="ECO:0007669"/>
    <property type="project" value="UniProtKB-UniRule"/>
</dbReference>
<dbReference type="GO" id="GO:0006109">
    <property type="term" value="P:regulation of carbohydrate metabolic process"/>
    <property type="evidence" value="ECO:0007669"/>
    <property type="project" value="InterPro"/>
</dbReference>
<dbReference type="Gene3D" id="2.60.40.4380">
    <property type="entry name" value="Translational regulator CsrA"/>
    <property type="match status" value="1"/>
</dbReference>
<dbReference type="HAMAP" id="MF_00167">
    <property type="entry name" value="CsrA"/>
    <property type="match status" value="1"/>
</dbReference>
<dbReference type="InterPro" id="IPR003751">
    <property type="entry name" value="CsrA"/>
</dbReference>
<dbReference type="InterPro" id="IPR036107">
    <property type="entry name" value="CsrA_sf"/>
</dbReference>
<dbReference type="NCBIfam" id="TIGR00202">
    <property type="entry name" value="csrA"/>
    <property type="match status" value="1"/>
</dbReference>
<dbReference type="NCBIfam" id="NF002469">
    <property type="entry name" value="PRK01712.1"/>
    <property type="match status" value="1"/>
</dbReference>
<dbReference type="PANTHER" id="PTHR34984">
    <property type="entry name" value="CARBON STORAGE REGULATOR"/>
    <property type="match status" value="1"/>
</dbReference>
<dbReference type="PANTHER" id="PTHR34984:SF1">
    <property type="entry name" value="CARBON STORAGE REGULATOR"/>
    <property type="match status" value="1"/>
</dbReference>
<dbReference type="Pfam" id="PF02599">
    <property type="entry name" value="CsrA"/>
    <property type="match status" value="1"/>
</dbReference>
<dbReference type="SUPFAM" id="SSF117130">
    <property type="entry name" value="CsrA-like"/>
    <property type="match status" value="1"/>
</dbReference>
<accession>C6C0E9</accession>
<proteinExistence type="inferred from homology"/>
<name>CSRA_MARSD</name>
<organism>
    <name type="scientific">Maridesulfovibrio salexigens (strain ATCC 14822 / DSM 2638 / NCIMB 8403 / VKM B-1763)</name>
    <name type="common">Desulfovibrio salexigens</name>
    <dbReference type="NCBI Taxonomy" id="526222"/>
    <lineage>
        <taxon>Bacteria</taxon>
        <taxon>Pseudomonadati</taxon>
        <taxon>Thermodesulfobacteriota</taxon>
        <taxon>Desulfovibrionia</taxon>
        <taxon>Desulfovibrionales</taxon>
        <taxon>Desulfovibrionaceae</taxon>
        <taxon>Maridesulfovibrio</taxon>
    </lineage>
</organism>
<comment type="function">
    <text evidence="1">A translational regulator that binds mRNA to regulate translation initiation and/or mRNA stability. Usually binds in the 5'-UTR at or near the Shine-Dalgarno sequence preventing ribosome-binding, thus repressing translation. Its main target seems to be the major flagellin gene, while its function is anatagonized by FliW.</text>
</comment>
<comment type="subunit">
    <text evidence="1">Homodimer; the beta-strands of each monomer intercalate to form a hydrophobic core, while the alpha-helices form wings that extend away from the core.</text>
</comment>
<comment type="subcellular location">
    <subcellularLocation>
        <location evidence="1">Cytoplasm</location>
    </subcellularLocation>
</comment>
<comment type="similarity">
    <text evidence="1">Belongs to the CsrA/RsmA family.</text>
</comment>
<evidence type="ECO:0000255" key="1">
    <source>
        <dbReference type="HAMAP-Rule" id="MF_00167"/>
    </source>
</evidence>
<sequence length="79" mass="9198">MLILTRRPGEALYLDDNIKITVLSVQGRQVKLGLEIPAETTVYREEVYLKIKEQNRLALENTEQDLLAATELWQKKEKK</sequence>
<keyword id="KW-1005">Bacterial flagellum biogenesis</keyword>
<keyword id="KW-0963">Cytoplasm</keyword>
<keyword id="KW-1185">Reference proteome</keyword>
<keyword id="KW-0678">Repressor</keyword>
<keyword id="KW-0694">RNA-binding</keyword>
<keyword id="KW-0810">Translation regulation</keyword>
<gene>
    <name evidence="1" type="primary">csrA</name>
    <name type="ordered locus">Desal_1018</name>
</gene>